<reference key="1">
    <citation type="journal article" date="2005" name="Nature">
        <title>The map-based sequence of the rice genome.</title>
        <authorList>
            <consortium name="International rice genome sequencing project (IRGSP)"/>
        </authorList>
    </citation>
    <scope>NUCLEOTIDE SEQUENCE [LARGE SCALE GENOMIC DNA]</scope>
    <source>
        <strain>cv. Nipponbare</strain>
    </source>
</reference>
<reference key="2">
    <citation type="journal article" date="2008" name="Nucleic Acids Res.">
        <title>The rice annotation project database (RAP-DB): 2008 update.</title>
        <authorList>
            <consortium name="The rice annotation project (RAP)"/>
        </authorList>
    </citation>
    <scope>GENOME REANNOTATION</scope>
    <source>
        <strain>cv. Nipponbare</strain>
    </source>
</reference>
<reference key="3">
    <citation type="journal article" date="2013" name="Rice">
        <title>Improvement of the Oryza sativa Nipponbare reference genome using next generation sequence and optical map data.</title>
        <authorList>
            <person name="Kawahara Y."/>
            <person name="de la Bastide M."/>
            <person name="Hamilton J.P."/>
            <person name="Kanamori H."/>
            <person name="McCombie W.R."/>
            <person name="Ouyang S."/>
            <person name="Schwartz D.C."/>
            <person name="Tanaka T."/>
            <person name="Wu J."/>
            <person name="Zhou S."/>
            <person name="Childs K.L."/>
            <person name="Davidson R.M."/>
            <person name="Lin H."/>
            <person name="Quesada-Ocampo L."/>
            <person name="Vaillancourt B."/>
            <person name="Sakai H."/>
            <person name="Lee S.S."/>
            <person name="Kim J."/>
            <person name="Numa H."/>
            <person name="Itoh T."/>
            <person name="Buell C.R."/>
            <person name="Matsumoto T."/>
        </authorList>
    </citation>
    <scope>GENOME REANNOTATION</scope>
    <source>
        <strain>cv. Nipponbare</strain>
    </source>
</reference>
<reference key="4">
    <citation type="journal article" date="2003" name="Science">
        <title>Collection, mapping, and annotation of over 28,000 cDNA clones from japonica rice.</title>
        <authorList>
            <consortium name="The rice full-length cDNA consortium"/>
        </authorList>
    </citation>
    <scope>NUCLEOTIDE SEQUENCE [LARGE SCALE MRNA]</scope>
    <source>
        <strain>cv. Nipponbare</strain>
    </source>
</reference>
<reference key="5">
    <citation type="journal article" date="2008" name="Plant Physiol.">
        <title>Genomic survey and gene expression analysis of the basic leucine zipper transcription factor family in rice.</title>
        <authorList>
            <person name="Nijhawan A."/>
            <person name="Jain M."/>
            <person name="Tyagi A.K."/>
            <person name="Khurana J.P."/>
        </authorList>
    </citation>
    <scope>GENE FAMILY</scope>
    <scope>NOMENCLATURE</scope>
</reference>
<reference key="6">
    <citation type="journal article" date="2012" name="Plant J.">
        <title>Signal transduction by IRE1-mediated splicing of bZIP50 and other stress sensors in the endoplasmic reticulum stress response of rice.</title>
        <authorList>
            <person name="Hayashi S."/>
            <person name="Wakasa Y."/>
            <person name="Takahashi H."/>
            <person name="Kawakatsu T."/>
            <person name="Takaiwa F."/>
        </authorList>
    </citation>
    <scope>FUNCTION</scope>
    <scope>INDUCTION</scope>
</reference>
<reference key="7">
    <citation type="journal article" date="2013" name="J. Exp. Bot.">
        <title>Analysis of rice ER-resident J-proteins reveals diversity and functional differentiation of the ER-resident Hsp70 system in plants.</title>
        <authorList>
            <person name="Ohta M."/>
            <person name="Wakasa Y."/>
            <person name="Takahashi H."/>
            <person name="Hayashi S."/>
            <person name="Kudo K."/>
            <person name="Takaiwa F."/>
        </authorList>
    </citation>
    <scope>SUBCELLULAR LOCATION</scope>
</reference>
<sequence length="568" mass="60072">MAEPDLLAPFADLPFPPGDDFPDFPTLGDDAFALEDFDLDDLDFDFDVDLFPPDAPPPVTTSSSSSAAGSPEAGTSSAGDGGSKNEESADSSSPSRSGSDGGGGKDGKDDEAKRRARLVRNRESAHQSRQRKKQYVEELEGKVKVMQATIADLTARISCVTAENAALKQQLGGAAGAGAAAPPPPMPMYPAVYPLPMPWIHPAYAMRGSQVPLVPIPRLKTQQPASTPEPPAKKARKTKKVAGVSLLGLLFLMMVCGCLVPAVNRMYGAAYTGEGAAIVPSHHGRILAVEGPQNSVSNGVDPKVPQNGSETLPALLYLPRNGKHVKINGNLVIKSIVASEKASSRLSNYGEKGSGNQGKEETSLAIPGYVAPLEAGEVMDSAKGMNELMALAPGDGSIYREDDGMLPQWFSEAMSGPMLNSGMCTEVFQFDLSPTTADANGIVPVYSGSVTNTSQNYTENLPSGPVQKVKNRRISYSEAIPLRGSTSNDTDHFKAPPKNHSQSHAGRKPVSSVVVSVLADPREASDRDGEGRISSNSLSRIFVVVLIDSVKYVTYSCVLPFKSHSPHL</sequence>
<feature type="chain" id="PRO_0000438370" description="bZIP transcription factor 60">
    <location>
        <begin position="1"/>
        <end position="568"/>
    </location>
</feature>
<feature type="topological domain" description="Cytoplasmic" evidence="7">
    <location>
        <begin position="1"/>
        <end position="240"/>
    </location>
</feature>
<feature type="transmembrane region" description="Helical" evidence="1">
    <location>
        <begin position="241"/>
        <end position="261"/>
    </location>
</feature>
<feature type="topological domain" description="Lumenal" evidence="7">
    <location>
        <begin position="262"/>
        <end position="568"/>
    </location>
</feature>
<feature type="domain" description="bZIP" evidence="3">
    <location>
        <begin position="111"/>
        <end position="171"/>
    </location>
</feature>
<feature type="region of interest" description="Disordered" evidence="4">
    <location>
        <begin position="1"/>
        <end position="29"/>
    </location>
</feature>
<feature type="region of interest" description="Disordered" evidence="4">
    <location>
        <begin position="45"/>
        <end position="134"/>
    </location>
</feature>
<feature type="region of interest" description="Basic motif" evidence="3">
    <location>
        <begin position="113"/>
        <end position="144"/>
    </location>
</feature>
<feature type="region of interest" description="Leucine-zipper" evidence="3">
    <location>
        <begin position="150"/>
        <end position="157"/>
    </location>
</feature>
<feature type="region of interest" description="Disordered" evidence="4">
    <location>
        <begin position="479"/>
        <end position="510"/>
    </location>
</feature>
<feature type="compositionally biased region" description="Low complexity" evidence="4">
    <location>
        <begin position="1"/>
        <end position="13"/>
    </location>
</feature>
<feature type="compositionally biased region" description="Low complexity" evidence="4">
    <location>
        <begin position="60"/>
        <end position="78"/>
    </location>
</feature>
<feature type="compositionally biased region" description="Basic and acidic residues" evidence="4">
    <location>
        <begin position="103"/>
        <end position="113"/>
    </location>
</feature>
<feature type="glycosylation site" description="N-linked (GlcNAc...) asparagine" evidence="2">
    <location>
        <position position="307"/>
    </location>
</feature>
<feature type="glycosylation site" description="N-linked (GlcNAc...) asparagine" evidence="2">
    <location>
        <position position="452"/>
    </location>
</feature>
<feature type="glycosylation site" description="N-linked (GlcNAc...) asparagine" evidence="2">
    <location>
        <position position="456"/>
    </location>
</feature>
<feature type="glycosylation site" description="N-linked (GlcNAc...) asparagine" evidence="2">
    <location>
        <position position="488"/>
    </location>
</feature>
<feature type="glycosylation site" description="N-linked (GlcNAc...) asparagine" evidence="2">
    <location>
        <position position="499"/>
    </location>
</feature>
<evidence type="ECO:0000255" key="1"/>
<evidence type="ECO:0000255" key="2">
    <source>
        <dbReference type="PROSITE-ProRule" id="PRU00498"/>
    </source>
</evidence>
<evidence type="ECO:0000255" key="3">
    <source>
        <dbReference type="PROSITE-ProRule" id="PRU00978"/>
    </source>
</evidence>
<evidence type="ECO:0000256" key="4">
    <source>
        <dbReference type="SAM" id="MobiDB-lite"/>
    </source>
</evidence>
<evidence type="ECO:0000269" key="5">
    <source>
    </source>
</evidence>
<evidence type="ECO:0000303" key="6">
    <source>
    </source>
</evidence>
<evidence type="ECO:0000305" key="7"/>
<evidence type="ECO:0000305" key="8">
    <source>
    </source>
</evidence>
<evidence type="ECO:0000305" key="9">
    <source>
    </source>
</evidence>
<evidence type="ECO:0000312" key="10">
    <source>
        <dbReference type="EMBL" id="BAC07004.1"/>
    </source>
</evidence>
<evidence type="ECO:0000312" key="11">
    <source>
        <dbReference type="EMBL" id="BAD30259.1"/>
    </source>
</evidence>
<evidence type="ECO:0000312" key="12">
    <source>
        <dbReference type="EMBL" id="BAF22360.1"/>
    </source>
</evidence>
<organism>
    <name type="scientific">Oryza sativa subsp. japonica</name>
    <name type="common">Rice</name>
    <dbReference type="NCBI Taxonomy" id="39947"/>
    <lineage>
        <taxon>Eukaryota</taxon>
        <taxon>Viridiplantae</taxon>
        <taxon>Streptophyta</taxon>
        <taxon>Embryophyta</taxon>
        <taxon>Tracheophyta</taxon>
        <taxon>Spermatophyta</taxon>
        <taxon>Magnoliopsida</taxon>
        <taxon>Liliopsida</taxon>
        <taxon>Poales</taxon>
        <taxon>Poaceae</taxon>
        <taxon>BOP clade</taxon>
        <taxon>Oryzoideae</taxon>
        <taxon>Oryzeae</taxon>
        <taxon>Oryzinae</taxon>
        <taxon>Oryza</taxon>
        <taxon>Oryza sativa</taxon>
    </lineage>
</organism>
<keyword id="KW-0238">DNA-binding</keyword>
<keyword id="KW-0256">Endoplasmic reticulum</keyword>
<keyword id="KW-0325">Glycoprotein</keyword>
<keyword id="KW-0472">Membrane</keyword>
<keyword id="KW-0539">Nucleus</keyword>
<keyword id="KW-1185">Reference proteome</keyword>
<keyword id="KW-0804">Transcription</keyword>
<keyword id="KW-0805">Transcription regulation</keyword>
<keyword id="KW-0812">Transmembrane</keyword>
<keyword id="KW-1133">Transmembrane helix</keyword>
<keyword id="KW-0834">Unfolded protein response</keyword>
<accession>Q8LIB3</accession>
<comment type="function">
    <text evidence="5">Transcription factor involved in endoplasmic reticulum (ER) stress response. Acts as a ER stress sensor and activates the transcription factor BZIP50 and the chaperone BIP1.</text>
</comment>
<comment type="subcellular location">
    <subcellularLocation>
        <location evidence="9">Endoplasmic reticulum membrane</location>
        <topology evidence="1">Single-pass membrane protein</topology>
    </subcellularLocation>
    <subcellularLocation>
        <location evidence="3 9">Nucleus</location>
    </subcellularLocation>
    <text evidence="9">The bZIP domain is translocated into the nucleus in response to ER stress.</text>
</comment>
<comment type="induction">
    <text evidence="8">By dithiothreitol- and tunicamycin-induced endoplasmic reticulum (ER) stress response.</text>
</comment>
<comment type="similarity">
    <text evidence="7">Belongs to the bZIP family.</text>
</comment>
<protein>
    <recommendedName>
        <fullName evidence="6">bZIP transcription factor 60</fullName>
        <shortName evidence="6">OsbZIP60</shortName>
    </recommendedName>
</protein>
<dbReference type="EMBL" id="AP003765">
    <property type="protein sequence ID" value="BAD30259.1"/>
    <property type="molecule type" value="Genomic_DNA"/>
</dbReference>
<dbReference type="EMBL" id="AP003832">
    <property type="protein sequence ID" value="BAC07004.1"/>
    <property type="molecule type" value="Genomic_DNA"/>
</dbReference>
<dbReference type="EMBL" id="AP008213">
    <property type="protein sequence ID" value="BAF22360.1"/>
    <property type="molecule type" value="Genomic_DNA"/>
</dbReference>
<dbReference type="EMBL" id="AP014963">
    <property type="protein sequence ID" value="BAT02885.1"/>
    <property type="molecule type" value="Genomic_DNA"/>
</dbReference>
<dbReference type="EMBL" id="AK121898">
    <property type="protein sequence ID" value="BAH00712.1"/>
    <property type="molecule type" value="mRNA"/>
</dbReference>
<dbReference type="RefSeq" id="XP_015647746.1">
    <property type="nucleotide sequence ID" value="XM_015792260.1"/>
</dbReference>
<dbReference type="SMR" id="Q8LIB3"/>
<dbReference type="FunCoup" id="Q8LIB3">
    <property type="interactions" value="24"/>
</dbReference>
<dbReference type="STRING" id="39947.Q8LIB3"/>
<dbReference type="GlyCosmos" id="Q8LIB3">
    <property type="glycosylation" value="5 sites, No reported glycans"/>
</dbReference>
<dbReference type="PaxDb" id="39947-Q8LIB3"/>
<dbReference type="EnsemblPlants" id="Os07t0644100-01">
    <property type="protein sequence ID" value="Os07t0644100-01"/>
    <property type="gene ID" value="Os07g0644100"/>
</dbReference>
<dbReference type="Gramene" id="Os07t0644100-01">
    <property type="protein sequence ID" value="Os07t0644100-01"/>
    <property type="gene ID" value="Os07g0644100"/>
</dbReference>
<dbReference type="KEGG" id="dosa:Os07g0644100"/>
<dbReference type="eggNOG" id="ENOG502QQUV">
    <property type="taxonomic scope" value="Eukaryota"/>
</dbReference>
<dbReference type="HOGENOM" id="CLU_018118_2_0_1"/>
<dbReference type="InParanoid" id="Q8LIB3"/>
<dbReference type="OMA" id="HGERDSC"/>
<dbReference type="OrthoDB" id="295274at2759"/>
<dbReference type="Proteomes" id="UP000000763">
    <property type="component" value="Chromosome 7"/>
</dbReference>
<dbReference type="Proteomes" id="UP000059680">
    <property type="component" value="Chromosome 7"/>
</dbReference>
<dbReference type="GO" id="GO:0005789">
    <property type="term" value="C:endoplasmic reticulum membrane"/>
    <property type="evidence" value="ECO:0000318"/>
    <property type="project" value="GO_Central"/>
</dbReference>
<dbReference type="GO" id="GO:0005634">
    <property type="term" value="C:nucleus"/>
    <property type="evidence" value="ECO:0000318"/>
    <property type="project" value="GO_Central"/>
</dbReference>
<dbReference type="GO" id="GO:0003677">
    <property type="term" value="F:DNA binding"/>
    <property type="evidence" value="ECO:0007669"/>
    <property type="project" value="UniProtKB-KW"/>
</dbReference>
<dbReference type="GO" id="GO:0003700">
    <property type="term" value="F:DNA-binding transcription factor activity"/>
    <property type="evidence" value="ECO:0007669"/>
    <property type="project" value="InterPro"/>
</dbReference>
<dbReference type="GO" id="GO:0034976">
    <property type="term" value="P:response to endoplasmic reticulum stress"/>
    <property type="evidence" value="ECO:0000315"/>
    <property type="project" value="UniProtKB"/>
</dbReference>
<dbReference type="GO" id="GO:0006986">
    <property type="term" value="P:response to unfolded protein"/>
    <property type="evidence" value="ECO:0007669"/>
    <property type="project" value="UniProtKB-KW"/>
</dbReference>
<dbReference type="CDD" id="cd14704">
    <property type="entry name" value="bZIP_HY5-like"/>
    <property type="match status" value="1"/>
</dbReference>
<dbReference type="FunFam" id="1.20.5.170:FF:000085">
    <property type="entry name" value="bZIP transcription factor 49"/>
    <property type="match status" value="1"/>
</dbReference>
<dbReference type="Gene3D" id="1.20.5.170">
    <property type="match status" value="1"/>
</dbReference>
<dbReference type="InterPro" id="IPR004827">
    <property type="entry name" value="bZIP"/>
</dbReference>
<dbReference type="InterPro" id="IPR046347">
    <property type="entry name" value="bZIP_sf"/>
</dbReference>
<dbReference type="PANTHER" id="PTHR47416">
    <property type="entry name" value="BASIC-LEUCINE ZIPPER TRANSCRIPTION FACTOR F-RELATED"/>
    <property type="match status" value="1"/>
</dbReference>
<dbReference type="PANTHER" id="PTHR47416:SF7">
    <property type="entry name" value="BZIP TRANSCRIPTION FACTOR 60"/>
    <property type="match status" value="1"/>
</dbReference>
<dbReference type="Pfam" id="PF00170">
    <property type="entry name" value="bZIP_1"/>
    <property type="match status" value="1"/>
</dbReference>
<dbReference type="SMART" id="SM00338">
    <property type="entry name" value="BRLZ"/>
    <property type="match status" value="1"/>
</dbReference>
<dbReference type="SUPFAM" id="SSF57959">
    <property type="entry name" value="Leucine zipper domain"/>
    <property type="match status" value="1"/>
</dbReference>
<dbReference type="PROSITE" id="PS50217">
    <property type="entry name" value="BZIP"/>
    <property type="match status" value="1"/>
</dbReference>
<dbReference type="PROSITE" id="PS00036">
    <property type="entry name" value="BZIP_BASIC"/>
    <property type="match status" value="1"/>
</dbReference>
<gene>
    <name evidence="6" type="primary">BZIP60</name>
    <name evidence="12" type="ordered locus">Os07g0644100</name>
    <name evidence="7" type="ordered locus">LOC_Os07g44950</name>
    <name evidence="11" type="ORF">OJ1003_C06.133</name>
    <name evidence="10" type="ORF">OJ1458_B07.101</name>
</gene>
<name>BZP60_ORYSJ</name>
<proteinExistence type="evidence at transcript level"/>